<proteinExistence type="inferred from homology"/>
<feature type="chain" id="PRO_1000076740" description="N-acetyl-gamma-glutamyl-phosphate reductase">
    <location>
        <begin position="1"/>
        <end position="352"/>
    </location>
</feature>
<feature type="active site" evidence="1">
    <location>
        <position position="151"/>
    </location>
</feature>
<keyword id="KW-0028">Amino-acid biosynthesis</keyword>
<keyword id="KW-0055">Arginine biosynthesis</keyword>
<keyword id="KW-0963">Cytoplasm</keyword>
<keyword id="KW-0521">NADP</keyword>
<keyword id="KW-0560">Oxidoreductase</keyword>
<keyword id="KW-1185">Reference proteome</keyword>
<evidence type="ECO:0000255" key="1">
    <source>
        <dbReference type="HAMAP-Rule" id="MF_00150"/>
    </source>
</evidence>
<gene>
    <name evidence="1" type="primary">argC</name>
    <name type="ordered locus">RSal33209_0777</name>
</gene>
<organism>
    <name type="scientific">Renibacterium salmoninarum (strain ATCC 33209 / DSM 20767 / JCM 11484 / NBRC 15589 / NCIMB 2235)</name>
    <dbReference type="NCBI Taxonomy" id="288705"/>
    <lineage>
        <taxon>Bacteria</taxon>
        <taxon>Bacillati</taxon>
        <taxon>Actinomycetota</taxon>
        <taxon>Actinomycetes</taxon>
        <taxon>Micrococcales</taxon>
        <taxon>Micrococcaceae</taxon>
        <taxon>Renibacterium</taxon>
    </lineage>
</organism>
<sequence>MKISVAVSGASGYAGGEVLRLLANHPQVQIGAITAHSNAGSRLGELQPHLYSLADRLLEENSVANLAGHDVVFLALPHGASGEIAAQLPAETLVIDAGADHRLVYAGAWQEFYHSEHAGTWPYGLPELPIAHGRRQREELRTTKRIAVPGCYPTSALLALAPGFAAGALLADDVVIVSASGTSGAGKAAKTNLLGSEVIGSMAPYGVGGVHRHTPEIEQGLSSVAGEQVTVSFTPTLAPMSRGILTTATAKVAPQLLKETSAAQLRQIWVDAYEDEEFIHVLPEGQWPATQSVLGSNHVGIQVALDERTGRVIVCSVIDNLTKGTAGAAVQSMNIALGLEENLGLKQLGVAP</sequence>
<reference key="1">
    <citation type="journal article" date="2008" name="J. Bacteriol.">
        <title>Genome sequence of the fish pathogen Renibacterium salmoninarum suggests reductive evolution away from an environmental Arthrobacter ancestor.</title>
        <authorList>
            <person name="Wiens G.D."/>
            <person name="Rockey D.D."/>
            <person name="Wu Z."/>
            <person name="Chang J."/>
            <person name="Levy R."/>
            <person name="Crane S."/>
            <person name="Chen D.S."/>
            <person name="Capri G.R."/>
            <person name="Burnett J.R."/>
            <person name="Sudheesh P.S."/>
            <person name="Schipma M.J."/>
            <person name="Burd H."/>
            <person name="Bhattacharyya A."/>
            <person name="Rhodes L.D."/>
            <person name="Kaul R."/>
            <person name="Strom M.S."/>
        </authorList>
    </citation>
    <scope>NUCLEOTIDE SEQUENCE [LARGE SCALE GENOMIC DNA]</scope>
    <source>
        <strain>ATCC 33209 / DSM 20767 / JCM 11484 / NBRC 15589 / NCIMB 2235</strain>
    </source>
</reference>
<dbReference type="EC" id="1.2.1.38" evidence="1"/>
<dbReference type="EMBL" id="CP000910">
    <property type="protein sequence ID" value="ABY22524.1"/>
    <property type="molecule type" value="Genomic_DNA"/>
</dbReference>
<dbReference type="RefSeq" id="WP_012244221.1">
    <property type="nucleotide sequence ID" value="NC_010168.1"/>
</dbReference>
<dbReference type="SMR" id="A9WQ84"/>
<dbReference type="STRING" id="288705.RSal33209_0777"/>
<dbReference type="KEGG" id="rsa:RSal33209_0777"/>
<dbReference type="eggNOG" id="COG0002">
    <property type="taxonomic scope" value="Bacteria"/>
</dbReference>
<dbReference type="HOGENOM" id="CLU_006384_0_0_11"/>
<dbReference type="UniPathway" id="UPA00068">
    <property type="reaction ID" value="UER00108"/>
</dbReference>
<dbReference type="Proteomes" id="UP000002007">
    <property type="component" value="Chromosome"/>
</dbReference>
<dbReference type="GO" id="GO:0005737">
    <property type="term" value="C:cytoplasm"/>
    <property type="evidence" value="ECO:0007669"/>
    <property type="project" value="UniProtKB-SubCell"/>
</dbReference>
<dbReference type="GO" id="GO:0003942">
    <property type="term" value="F:N-acetyl-gamma-glutamyl-phosphate reductase activity"/>
    <property type="evidence" value="ECO:0007669"/>
    <property type="project" value="UniProtKB-UniRule"/>
</dbReference>
<dbReference type="GO" id="GO:0051287">
    <property type="term" value="F:NAD binding"/>
    <property type="evidence" value="ECO:0007669"/>
    <property type="project" value="InterPro"/>
</dbReference>
<dbReference type="GO" id="GO:0070401">
    <property type="term" value="F:NADP+ binding"/>
    <property type="evidence" value="ECO:0007669"/>
    <property type="project" value="InterPro"/>
</dbReference>
<dbReference type="GO" id="GO:0006526">
    <property type="term" value="P:L-arginine biosynthetic process"/>
    <property type="evidence" value="ECO:0007669"/>
    <property type="project" value="UniProtKB-UniRule"/>
</dbReference>
<dbReference type="CDD" id="cd24148">
    <property type="entry name" value="AGPR_1_actinobacAGPR_like"/>
    <property type="match status" value="1"/>
</dbReference>
<dbReference type="CDD" id="cd23934">
    <property type="entry name" value="AGPR_1_C"/>
    <property type="match status" value="1"/>
</dbReference>
<dbReference type="FunFam" id="3.30.360.10:FF:000014">
    <property type="entry name" value="N-acetyl-gamma-glutamyl-phosphate reductase"/>
    <property type="match status" value="1"/>
</dbReference>
<dbReference type="Gene3D" id="3.30.360.10">
    <property type="entry name" value="Dihydrodipicolinate Reductase, domain 2"/>
    <property type="match status" value="1"/>
</dbReference>
<dbReference type="Gene3D" id="3.40.50.720">
    <property type="entry name" value="NAD(P)-binding Rossmann-like Domain"/>
    <property type="match status" value="1"/>
</dbReference>
<dbReference type="HAMAP" id="MF_00150">
    <property type="entry name" value="ArgC_type1"/>
    <property type="match status" value="1"/>
</dbReference>
<dbReference type="InterPro" id="IPR023013">
    <property type="entry name" value="AGPR_AS"/>
</dbReference>
<dbReference type="InterPro" id="IPR000706">
    <property type="entry name" value="AGPR_type-1"/>
</dbReference>
<dbReference type="InterPro" id="IPR036291">
    <property type="entry name" value="NAD(P)-bd_dom_sf"/>
</dbReference>
<dbReference type="InterPro" id="IPR050085">
    <property type="entry name" value="NAGSA_dehydrogenase"/>
</dbReference>
<dbReference type="InterPro" id="IPR000534">
    <property type="entry name" value="Semialdehyde_DH_NAD-bd"/>
</dbReference>
<dbReference type="NCBIfam" id="TIGR01850">
    <property type="entry name" value="argC"/>
    <property type="match status" value="1"/>
</dbReference>
<dbReference type="PANTHER" id="PTHR32338:SF10">
    <property type="entry name" value="N-ACETYL-GAMMA-GLUTAMYL-PHOSPHATE REDUCTASE, CHLOROPLASTIC-RELATED"/>
    <property type="match status" value="1"/>
</dbReference>
<dbReference type="PANTHER" id="PTHR32338">
    <property type="entry name" value="N-ACETYL-GAMMA-GLUTAMYL-PHOSPHATE REDUCTASE, CHLOROPLASTIC-RELATED-RELATED"/>
    <property type="match status" value="1"/>
</dbReference>
<dbReference type="Pfam" id="PF01118">
    <property type="entry name" value="Semialdhyde_dh"/>
    <property type="match status" value="1"/>
</dbReference>
<dbReference type="Pfam" id="PF22698">
    <property type="entry name" value="Semialdhyde_dhC_1"/>
    <property type="match status" value="1"/>
</dbReference>
<dbReference type="SMART" id="SM00859">
    <property type="entry name" value="Semialdhyde_dh"/>
    <property type="match status" value="1"/>
</dbReference>
<dbReference type="SUPFAM" id="SSF55347">
    <property type="entry name" value="Glyceraldehyde-3-phosphate dehydrogenase-like, C-terminal domain"/>
    <property type="match status" value="1"/>
</dbReference>
<dbReference type="SUPFAM" id="SSF51735">
    <property type="entry name" value="NAD(P)-binding Rossmann-fold domains"/>
    <property type="match status" value="1"/>
</dbReference>
<dbReference type="PROSITE" id="PS01224">
    <property type="entry name" value="ARGC"/>
    <property type="match status" value="1"/>
</dbReference>
<accession>A9WQ84</accession>
<comment type="function">
    <text evidence="1">Catalyzes the NADPH-dependent reduction of N-acetyl-5-glutamyl phosphate to yield N-acetyl-L-glutamate 5-semialdehyde.</text>
</comment>
<comment type="catalytic activity">
    <reaction evidence="1">
        <text>N-acetyl-L-glutamate 5-semialdehyde + phosphate + NADP(+) = N-acetyl-L-glutamyl 5-phosphate + NADPH + H(+)</text>
        <dbReference type="Rhea" id="RHEA:21588"/>
        <dbReference type="ChEBI" id="CHEBI:15378"/>
        <dbReference type="ChEBI" id="CHEBI:29123"/>
        <dbReference type="ChEBI" id="CHEBI:43474"/>
        <dbReference type="ChEBI" id="CHEBI:57783"/>
        <dbReference type="ChEBI" id="CHEBI:57936"/>
        <dbReference type="ChEBI" id="CHEBI:58349"/>
        <dbReference type="EC" id="1.2.1.38"/>
    </reaction>
</comment>
<comment type="pathway">
    <text evidence="1">Amino-acid biosynthesis; L-arginine biosynthesis; N(2)-acetyl-L-ornithine from L-glutamate: step 3/4.</text>
</comment>
<comment type="subcellular location">
    <subcellularLocation>
        <location evidence="1">Cytoplasm</location>
    </subcellularLocation>
</comment>
<comment type="similarity">
    <text evidence="1">Belongs to the NAGSA dehydrogenase family. Type 1 subfamily.</text>
</comment>
<name>ARGC_RENSM</name>
<protein>
    <recommendedName>
        <fullName evidence="1">N-acetyl-gamma-glutamyl-phosphate reductase</fullName>
        <shortName evidence="1">AGPR</shortName>
        <ecNumber evidence="1">1.2.1.38</ecNumber>
    </recommendedName>
    <alternativeName>
        <fullName evidence="1">N-acetyl-glutamate semialdehyde dehydrogenase</fullName>
        <shortName evidence="1">NAGSA dehydrogenase</shortName>
    </alternativeName>
</protein>